<organism>
    <name type="scientific">Leptospira interrogans serogroup Icterohaemorrhagiae serovar Lai (strain 56601)</name>
    <dbReference type="NCBI Taxonomy" id="189518"/>
    <lineage>
        <taxon>Bacteria</taxon>
        <taxon>Pseudomonadati</taxon>
        <taxon>Spirochaetota</taxon>
        <taxon>Spirochaetia</taxon>
        <taxon>Leptospirales</taxon>
        <taxon>Leptospiraceae</taxon>
        <taxon>Leptospira</taxon>
    </lineage>
</organism>
<evidence type="ECO:0000255" key="1">
    <source>
        <dbReference type="HAMAP-Rule" id="MF_00735"/>
    </source>
</evidence>
<feature type="chain" id="PRO_0000192276" description="Ribosomal protein L11 methyltransferase">
    <location>
        <begin position="1"/>
        <end position="300"/>
    </location>
</feature>
<feature type="binding site" evidence="1">
    <location>
        <position position="147"/>
    </location>
    <ligand>
        <name>S-adenosyl-L-methionine</name>
        <dbReference type="ChEBI" id="CHEBI:59789"/>
    </ligand>
</feature>
<feature type="binding site" evidence="1">
    <location>
        <position position="168"/>
    </location>
    <ligand>
        <name>S-adenosyl-L-methionine</name>
        <dbReference type="ChEBI" id="CHEBI:59789"/>
    </ligand>
</feature>
<feature type="binding site" evidence="1">
    <location>
        <position position="190"/>
    </location>
    <ligand>
        <name>S-adenosyl-L-methionine</name>
        <dbReference type="ChEBI" id="CHEBI:59789"/>
    </ligand>
</feature>
<feature type="binding site" evidence="1">
    <location>
        <position position="236"/>
    </location>
    <ligand>
        <name>S-adenosyl-L-methionine</name>
        <dbReference type="ChEBI" id="CHEBI:59789"/>
    </ligand>
</feature>
<gene>
    <name evidence="1" type="primary">prmA</name>
    <name type="ordered locus">LA_1391</name>
</gene>
<dbReference type="EC" id="2.1.1.-" evidence="1"/>
<dbReference type="EMBL" id="AE010300">
    <property type="protein sequence ID" value="AAN48590.1"/>
    <property type="molecule type" value="Genomic_DNA"/>
</dbReference>
<dbReference type="RefSeq" id="NP_711572.1">
    <property type="nucleotide sequence ID" value="NC_004342.2"/>
</dbReference>
<dbReference type="RefSeq" id="WP_001270455.1">
    <property type="nucleotide sequence ID" value="NC_004342.2"/>
</dbReference>
<dbReference type="SMR" id="Q8F6B7"/>
<dbReference type="FunCoup" id="Q8F6B7">
    <property type="interactions" value="392"/>
</dbReference>
<dbReference type="STRING" id="189518.LA_1391"/>
<dbReference type="PaxDb" id="189518-LA_1391"/>
<dbReference type="EnsemblBacteria" id="AAN48590">
    <property type="protein sequence ID" value="AAN48590"/>
    <property type="gene ID" value="LA_1391"/>
</dbReference>
<dbReference type="KEGG" id="lil:LA_1391"/>
<dbReference type="PATRIC" id="fig|189518.3.peg.1386"/>
<dbReference type="HOGENOM" id="CLU_049382_0_2_12"/>
<dbReference type="InParanoid" id="Q8F6B7"/>
<dbReference type="OrthoDB" id="9785995at2"/>
<dbReference type="Proteomes" id="UP000001408">
    <property type="component" value="Chromosome I"/>
</dbReference>
<dbReference type="GO" id="GO:0005737">
    <property type="term" value="C:cytoplasm"/>
    <property type="evidence" value="ECO:0007669"/>
    <property type="project" value="UniProtKB-SubCell"/>
</dbReference>
<dbReference type="GO" id="GO:0008276">
    <property type="term" value="F:protein methyltransferase activity"/>
    <property type="evidence" value="ECO:0000318"/>
    <property type="project" value="GO_Central"/>
</dbReference>
<dbReference type="GO" id="GO:0016279">
    <property type="term" value="F:protein-lysine N-methyltransferase activity"/>
    <property type="evidence" value="ECO:0007669"/>
    <property type="project" value="RHEA"/>
</dbReference>
<dbReference type="GO" id="GO:0032259">
    <property type="term" value="P:methylation"/>
    <property type="evidence" value="ECO:0007669"/>
    <property type="project" value="UniProtKB-KW"/>
</dbReference>
<dbReference type="CDD" id="cd02440">
    <property type="entry name" value="AdoMet_MTases"/>
    <property type="match status" value="1"/>
</dbReference>
<dbReference type="Gene3D" id="3.40.50.150">
    <property type="entry name" value="Vaccinia Virus protein VP39"/>
    <property type="match status" value="1"/>
</dbReference>
<dbReference type="HAMAP" id="MF_00735">
    <property type="entry name" value="Methyltr_PrmA"/>
    <property type="match status" value="1"/>
</dbReference>
<dbReference type="InterPro" id="IPR050078">
    <property type="entry name" value="Ribosomal_L11_MeTrfase_PrmA"/>
</dbReference>
<dbReference type="InterPro" id="IPR004498">
    <property type="entry name" value="Ribosomal_PrmA_MeTrfase"/>
</dbReference>
<dbReference type="InterPro" id="IPR029063">
    <property type="entry name" value="SAM-dependent_MTases_sf"/>
</dbReference>
<dbReference type="PANTHER" id="PTHR43648">
    <property type="entry name" value="ELECTRON TRANSFER FLAVOPROTEIN BETA SUBUNIT LYSINE METHYLTRANSFERASE"/>
    <property type="match status" value="1"/>
</dbReference>
<dbReference type="PANTHER" id="PTHR43648:SF1">
    <property type="entry name" value="ELECTRON TRANSFER FLAVOPROTEIN BETA SUBUNIT LYSINE METHYLTRANSFERASE"/>
    <property type="match status" value="1"/>
</dbReference>
<dbReference type="Pfam" id="PF06325">
    <property type="entry name" value="PrmA"/>
    <property type="match status" value="1"/>
</dbReference>
<dbReference type="PIRSF" id="PIRSF000401">
    <property type="entry name" value="RPL11_MTase"/>
    <property type="match status" value="1"/>
</dbReference>
<dbReference type="SUPFAM" id="SSF53335">
    <property type="entry name" value="S-adenosyl-L-methionine-dependent methyltransferases"/>
    <property type="match status" value="1"/>
</dbReference>
<accession>Q8F6B7</accession>
<name>PRMA_LEPIN</name>
<reference key="1">
    <citation type="journal article" date="2003" name="Nature">
        <title>Unique physiological and pathogenic features of Leptospira interrogans revealed by whole-genome sequencing.</title>
        <authorList>
            <person name="Ren S.-X."/>
            <person name="Fu G."/>
            <person name="Jiang X.-G."/>
            <person name="Zeng R."/>
            <person name="Miao Y.-G."/>
            <person name="Xu H."/>
            <person name="Zhang Y.-X."/>
            <person name="Xiong H."/>
            <person name="Lu G."/>
            <person name="Lu L.-F."/>
            <person name="Jiang H.-Q."/>
            <person name="Jia J."/>
            <person name="Tu Y.-F."/>
            <person name="Jiang J.-X."/>
            <person name="Gu W.-Y."/>
            <person name="Zhang Y.-Q."/>
            <person name="Cai Z."/>
            <person name="Sheng H.-H."/>
            <person name="Yin H.-F."/>
            <person name="Zhang Y."/>
            <person name="Zhu G.-F."/>
            <person name="Wan M."/>
            <person name="Huang H.-L."/>
            <person name="Qian Z."/>
            <person name="Wang S.-Y."/>
            <person name="Ma W."/>
            <person name="Yao Z.-J."/>
            <person name="Shen Y."/>
            <person name="Qiang B.-Q."/>
            <person name="Xia Q.-C."/>
            <person name="Guo X.-K."/>
            <person name="Danchin A."/>
            <person name="Saint Girons I."/>
            <person name="Somerville R.L."/>
            <person name="Wen Y.-M."/>
            <person name="Shi M.-H."/>
            <person name="Chen Z."/>
            <person name="Xu J.-G."/>
            <person name="Zhao G.-P."/>
        </authorList>
    </citation>
    <scope>NUCLEOTIDE SEQUENCE [LARGE SCALE GENOMIC DNA]</scope>
    <source>
        <strain>56601</strain>
    </source>
</reference>
<keyword id="KW-0963">Cytoplasm</keyword>
<keyword id="KW-0489">Methyltransferase</keyword>
<keyword id="KW-1185">Reference proteome</keyword>
<keyword id="KW-0949">S-adenosyl-L-methionine</keyword>
<keyword id="KW-0808">Transferase</keyword>
<comment type="function">
    <text evidence="1">Methylates ribosomal protein L11.</text>
</comment>
<comment type="catalytic activity">
    <reaction evidence="1">
        <text>L-lysyl-[protein] + 3 S-adenosyl-L-methionine = N(6),N(6),N(6)-trimethyl-L-lysyl-[protein] + 3 S-adenosyl-L-homocysteine + 3 H(+)</text>
        <dbReference type="Rhea" id="RHEA:54192"/>
        <dbReference type="Rhea" id="RHEA-COMP:9752"/>
        <dbReference type="Rhea" id="RHEA-COMP:13826"/>
        <dbReference type="ChEBI" id="CHEBI:15378"/>
        <dbReference type="ChEBI" id="CHEBI:29969"/>
        <dbReference type="ChEBI" id="CHEBI:57856"/>
        <dbReference type="ChEBI" id="CHEBI:59789"/>
        <dbReference type="ChEBI" id="CHEBI:61961"/>
    </reaction>
</comment>
<comment type="subcellular location">
    <subcellularLocation>
        <location evidence="1">Cytoplasm</location>
    </subcellularLocation>
</comment>
<comment type="similarity">
    <text evidence="1">Belongs to the methyltransferase superfamily. PrmA family.</text>
</comment>
<proteinExistence type="inferred from homology"/>
<protein>
    <recommendedName>
        <fullName evidence="1">Ribosomal protein L11 methyltransferase</fullName>
        <shortName evidence="1">L11 Mtase</shortName>
        <ecNumber evidence="1">2.1.1.-</ecNumber>
    </recommendedName>
</protein>
<sequence length="300" mass="33887">MRYREIILSIPKEIAENFTSFLDEVGVVGYYEILFDREVPRAPDEEIISDDTKFRVYLAEEDKENETKILIFLKATAGESFFLESRWIETKEYEEAYKEFYKPFIIGSYRVIPTWEKDTALGTTPEGIFPLLVNPGLAFGTGHHETTRLVLGRMGDLNLSAKRIADVGTGSGILSLAAAKSGASLILAIDVDPNSVRSASFNRDENEISSEVLVVEEGGFDHKKIQEQTWDLLIANITFAVLKANIQKIASIKTDHFLFSGVITERKEEFLELLKNTVGGEGVFFREDTGWELIEWKRKG</sequence>